<organism>
    <name type="scientific">Shewanella oneidensis (strain ATCC 700550 / JCM 31522 / CIP 106686 / LMG 19005 / NCIMB 14063 / MR-1)</name>
    <dbReference type="NCBI Taxonomy" id="211586"/>
    <lineage>
        <taxon>Bacteria</taxon>
        <taxon>Pseudomonadati</taxon>
        <taxon>Pseudomonadota</taxon>
        <taxon>Gammaproteobacteria</taxon>
        <taxon>Alteromonadales</taxon>
        <taxon>Shewanellaceae</taxon>
        <taxon>Shewanella</taxon>
    </lineage>
</organism>
<feature type="chain" id="PRO_0000098459" description="Isoleucine--tRNA ligase">
    <location>
        <begin position="1"/>
        <end position="940"/>
    </location>
</feature>
<feature type="short sequence motif" description="'HIGH' region">
    <location>
        <begin position="58"/>
        <end position="68"/>
    </location>
</feature>
<feature type="short sequence motif" description="'KMSKS' region">
    <location>
        <begin position="605"/>
        <end position="609"/>
    </location>
</feature>
<feature type="binding site" evidence="1">
    <location>
        <position position="564"/>
    </location>
    <ligand>
        <name>L-isoleucyl-5'-AMP</name>
        <dbReference type="ChEBI" id="CHEBI:178002"/>
    </ligand>
</feature>
<feature type="binding site" evidence="1">
    <location>
        <position position="608"/>
    </location>
    <ligand>
        <name>ATP</name>
        <dbReference type="ChEBI" id="CHEBI:30616"/>
    </ligand>
</feature>
<feature type="binding site" evidence="1">
    <location>
        <position position="903"/>
    </location>
    <ligand>
        <name>Zn(2+)</name>
        <dbReference type="ChEBI" id="CHEBI:29105"/>
    </ligand>
</feature>
<feature type="binding site" evidence="1">
    <location>
        <position position="906"/>
    </location>
    <ligand>
        <name>Zn(2+)</name>
        <dbReference type="ChEBI" id="CHEBI:29105"/>
    </ligand>
</feature>
<feature type="binding site" evidence="1">
    <location>
        <position position="923"/>
    </location>
    <ligand>
        <name>Zn(2+)</name>
        <dbReference type="ChEBI" id="CHEBI:29105"/>
    </ligand>
</feature>
<feature type="binding site" evidence="1">
    <location>
        <position position="926"/>
    </location>
    <ligand>
        <name>Zn(2+)</name>
        <dbReference type="ChEBI" id="CHEBI:29105"/>
    </ligand>
</feature>
<accession>Q8EBI4</accession>
<gene>
    <name evidence="1" type="primary">ileS</name>
    <name type="ordered locus">SO_3532</name>
</gene>
<reference key="1">
    <citation type="journal article" date="2002" name="Nat. Biotechnol.">
        <title>Genome sequence of the dissimilatory metal ion-reducing bacterium Shewanella oneidensis.</title>
        <authorList>
            <person name="Heidelberg J.F."/>
            <person name="Paulsen I.T."/>
            <person name="Nelson K.E."/>
            <person name="Gaidos E.J."/>
            <person name="Nelson W.C."/>
            <person name="Read T.D."/>
            <person name="Eisen J.A."/>
            <person name="Seshadri R."/>
            <person name="Ward N.L."/>
            <person name="Methe B.A."/>
            <person name="Clayton R.A."/>
            <person name="Meyer T."/>
            <person name="Tsapin A."/>
            <person name="Scott J."/>
            <person name="Beanan M.J."/>
            <person name="Brinkac L.M."/>
            <person name="Daugherty S.C."/>
            <person name="DeBoy R.T."/>
            <person name="Dodson R.J."/>
            <person name="Durkin A.S."/>
            <person name="Haft D.H."/>
            <person name="Kolonay J.F."/>
            <person name="Madupu R."/>
            <person name="Peterson J.D."/>
            <person name="Umayam L.A."/>
            <person name="White O."/>
            <person name="Wolf A.M."/>
            <person name="Vamathevan J.J."/>
            <person name="Weidman J.F."/>
            <person name="Impraim M."/>
            <person name="Lee K."/>
            <person name="Berry K.J."/>
            <person name="Lee C."/>
            <person name="Mueller J."/>
            <person name="Khouri H.M."/>
            <person name="Gill J."/>
            <person name="Utterback T.R."/>
            <person name="McDonald L.A."/>
            <person name="Feldblyum T.V."/>
            <person name="Smith H.O."/>
            <person name="Venter J.C."/>
            <person name="Nealson K.H."/>
            <person name="Fraser C.M."/>
        </authorList>
    </citation>
    <scope>NUCLEOTIDE SEQUENCE [LARGE SCALE GENOMIC DNA]</scope>
    <source>
        <strain>ATCC 700550 / JCM 31522 / CIP 106686 / LMG 19005 / NCIMB 14063 / MR-1</strain>
    </source>
</reference>
<sequence length="940" mass="105792">MSDYKFTLNLPETEFPMRGNLANREPEMLERWTKDGLYQQIRDSRIGRTPFILHDGPPYANGSIHIGHSVNKILKDIIVKSKTMSGFDAPYVPGWDCHGLPIELKVEQKVGKPGQKISAAEFREECRKYAAEQVDGQREDFIRLGVLGDWQNPYLTMDFATEANIVRSLSKVIENGHLHKGVKPVHWCTDCGSALAEAEVEYEDKTSPAIDVAFTAVDSKAVAVKFGVSDYSHSVSMVIWTTTPWTLPANRALSISPELDYSLVEFVKDGVTHAVILADVLVEACMTRYGAESHSVLAKIKGAALELVRFKHPFLAFDVPAILGDHVTTDAGTGVVHTAPGHGQDDFVVGQKYGLEVANPVGDNGVYKPDTEFFAGQHVFKANDNVVALLKEKGALLHHVAYRHSYPHCWRHKTPIIFRATPQWFISMDNHNLRKQALSEIEQIQWIPDWGQSRIEKMVENRPDWCISRQRTWGVPITLFVHRETEELHPDSVSLMARVANRIEQEGIQAWWDLDAAELLGEEAEQYRKVTDTLDVWYDSGSTFASVVAARPEFHGHGVDLYLEGSDQHRGWFMSSLMISTAMTGKAPYKQVLTHGFTVDGKGRKMSKSIGNVIAPQQVTNKLGADILRLWVAATDYSGEMTVSDEILNRSADAYRRIRNTARFLLANLNGFDPKNDLVAVEDMVALDRWAVRRAAALQQEIIEAYEQYNFHIVTQKLMQFCSIELGSFYLDIIKDRQYTAKQEGHARRSCQSALFHIAEAMVRWIAPVLSFTADEVWQLLPGQRDAYVFTQEWYQGLQSITLDTDLSDAYWENLLTVRNEVNKVIEQARRDKRVGGSLEAEVTLFADATLTEQLTHIGDELRFVLLTSEAKVLPLVDATSDAVETELASLKLVVNATTAEKCERCWHHREEVGTIEAHPTLCHRCVTNIEGDGEVRLFA</sequence>
<comment type="function">
    <text evidence="1">Catalyzes the attachment of isoleucine to tRNA(Ile). As IleRS can inadvertently accommodate and process structurally similar amino acids such as valine, to avoid such errors it has two additional distinct tRNA(Ile)-dependent editing activities. One activity is designated as 'pretransfer' editing and involves the hydrolysis of activated Val-AMP. The other activity is designated 'posttransfer' editing and involves deacylation of mischarged Val-tRNA(Ile).</text>
</comment>
<comment type="catalytic activity">
    <reaction evidence="1">
        <text>tRNA(Ile) + L-isoleucine + ATP = L-isoleucyl-tRNA(Ile) + AMP + diphosphate</text>
        <dbReference type="Rhea" id="RHEA:11060"/>
        <dbReference type="Rhea" id="RHEA-COMP:9666"/>
        <dbReference type="Rhea" id="RHEA-COMP:9695"/>
        <dbReference type="ChEBI" id="CHEBI:30616"/>
        <dbReference type="ChEBI" id="CHEBI:33019"/>
        <dbReference type="ChEBI" id="CHEBI:58045"/>
        <dbReference type="ChEBI" id="CHEBI:78442"/>
        <dbReference type="ChEBI" id="CHEBI:78528"/>
        <dbReference type="ChEBI" id="CHEBI:456215"/>
        <dbReference type="EC" id="6.1.1.5"/>
    </reaction>
</comment>
<comment type="cofactor">
    <cofactor evidence="1">
        <name>Zn(2+)</name>
        <dbReference type="ChEBI" id="CHEBI:29105"/>
    </cofactor>
    <text evidence="1">Binds 1 zinc ion per subunit.</text>
</comment>
<comment type="subunit">
    <text evidence="1">Monomer.</text>
</comment>
<comment type="subcellular location">
    <subcellularLocation>
        <location evidence="1">Cytoplasm</location>
    </subcellularLocation>
</comment>
<comment type="domain">
    <text evidence="1">IleRS has two distinct active sites: one for aminoacylation and one for editing. The misactivated valine is translocated from the active site to the editing site, which sterically excludes the correctly activated isoleucine. The single editing site contains two valyl binding pockets, one specific for each substrate (Val-AMP or Val-tRNA(Ile)).</text>
</comment>
<comment type="similarity">
    <text evidence="1">Belongs to the class-I aminoacyl-tRNA synthetase family. IleS type 1 subfamily.</text>
</comment>
<name>SYI_SHEON</name>
<keyword id="KW-0030">Aminoacyl-tRNA synthetase</keyword>
<keyword id="KW-0067">ATP-binding</keyword>
<keyword id="KW-0963">Cytoplasm</keyword>
<keyword id="KW-0436">Ligase</keyword>
<keyword id="KW-0479">Metal-binding</keyword>
<keyword id="KW-0547">Nucleotide-binding</keyword>
<keyword id="KW-0648">Protein biosynthesis</keyword>
<keyword id="KW-1185">Reference proteome</keyword>
<keyword id="KW-0862">Zinc</keyword>
<dbReference type="EC" id="6.1.1.5" evidence="1"/>
<dbReference type="EMBL" id="AE014299">
    <property type="protein sequence ID" value="AAN56523.1"/>
    <property type="molecule type" value="Genomic_DNA"/>
</dbReference>
<dbReference type="RefSeq" id="NP_719079.1">
    <property type="nucleotide sequence ID" value="NC_004347.2"/>
</dbReference>
<dbReference type="RefSeq" id="WP_011073365.1">
    <property type="nucleotide sequence ID" value="NC_004347.2"/>
</dbReference>
<dbReference type="SMR" id="Q8EBI4"/>
<dbReference type="STRING" id="211586.SO_3532"/>
<dbReference type="PaxDb" id="211586-SO_3532"/>
<dbReference type="KEGG" id="son:SO_3532"/>
<dbReference type="PATRIC" id="fig|211586.12.peg.3428"/>
<dbReference type="eggNOG" id="COG0060">
    <property type="taxonomic scope" value="Bacteria"/>
</dbReference>
<dbReference type="HOGENOM" id="CLU_001493_7_1_6"/>
<dbReference type="OrthoDB" id="9810365at2"/>
<dbReference type="PhylomeDB" id="Q8EBI4"/>
<dbReference type="BioCyc" id="SONE211586:G1GMP-3294-MONOMER"/>
<dbReference type="Proteomes" id="UP000008186">
    <property type="component" value="Chromosome"/>
</dbReference>
<dbReference type="GO" id="GO:0005829">
    <property type="term" value="C:cytosol"/>
    <property type="evidence" value="ECO:0000318"/>
    <property type="project" value="GO_Central"/>
</dbReference>
<dbReference type="GO" id="GO:0002161">
    <property type="term" value="F:aminoacyl-tRNA deacylase activity"/>
    <property type="evidence" value="ECO:0007669"/>
    <property type="project" value="InterPro"/>
</dbReference>
<dbReference type="GO" id="GO:0005524">
    <property type="term" value="F:ATP binding"/>
    <property type="evidence" value="ECO:0007669"/>
    <property type="project" value="UniProtKB-UniRule"/>
</dbReference>
<dbReference type="GO" id="GO:0004822">
    <property type="term" value="F:isoleucine-tRNA ligase activity"/>
    <property type="evidence" value="ECO:0000318"/>
    <property type="project" value="GO_Central"/>
</dbReference>
<dbReference type="GO" id="GO:0000049">
    <property type="term" value="F:tRNA binding"/>
    <property type="evidence" value="ECO:0007669"/>
    <property type="project" value="InterPro"/>
</dbReference>
<dbReference type="GO" id="GO:0008270">
    <property type="term" value="F:zinc ion binding"/>
    <property type="evidence" value="ECO:0007669"/>
    <property type="project" value="UniProtKB-UniRule"/>
</dbReference>
<dbReference type="GO" id="GO:0006428">
    <property type="term" value="P:isoleucyl-tRNA aminoacylation"/>
    <property type="evidence" value="ECO:0000318"/>
    <property type="project" value="GO_Central"/>
</dbReference>
<dbReference type="CDD" id="cd07960">
    <property type="entry name" value="Anticodon_Ia_Ile_BEm"/>
    <property type="match status" value="1"/>
</dbReference>
<dbReference type="CDD" id="cd00818">
    <property type="entry name" value="IleRS_core"/>
    <property type="match status" value="1"/>
</dbReference>
<dbReference type="FunFam" id="1.10.730.20:FF:000001">
    <property type="entry name" value="Isoleucine--tRNA ligase"/>
    <property type="match status" value="1"/>
</dbReference>
<dbReference type="FunFam" id="3.40.50.620:FF:000042">
    <property type="entry name" value="Isoleucine--tRNA ligase"/>
    <property type="match status" value="1"/>
</dbReference>
<dbReference type="FunFam" id="3.40.50.620:FF:000048">
    <property type="entry name" value="Isoleucine--tRNA ligase"/>
    <property type="match status" value="1"/>
</dbReference>
<dbReference type="Gene3D" id="1.10.730.20">
    <property type="match status" value="1"/>
</dbReference>
<dbReference type="Gene3D" id="3.40.50.620">
    <property type="entry name" value="HUPs"/>
    <property type="match status" value="2"/>
</dbReference>
<dbReference type="HAMAP" id="MF_02002">
    <property type="entry name" value="Ile_tRNA_synth_type1"/>
    <property type="match status" value="1"/>
</dbReference>
<dbReference type="InterPro" id="IPR001412">
    <property type="entry name" value="aa-tRNA-synth_I_CS"/>
</dbReference>
<dbReference type="InterPro" id="IPR002300">
    <property type="entry name" value="aa-tRNA-synth_Ia"/>
</dbReference>
<dbReference type="InterPro" id="IPR033708">
    <property type="entry name" value="Anticodon_Ile_BEm"/>
</dbReference>
<dbReference type="InterPro" id="IPR002301">
    <property type="entry name" value="Ile-tRNA-ligase"/>
</dbReference>
<dbReference type="InterPro" id="IPR023585">
    <property type="entry name" value="Ile-tRNA-ligase_type1"/>
</dbReference>
<dbReference type="InterPro" id="IPR050081">
    <property type="entry name" value="Ile-tRNA_ligase"/>
</dbReference>
<dbReference type="InterPro" id="IPR013155">
    <property type="entry name" value="M/V/L/I-tRNA-synth_anticd-bd"/>
</dbReference>
<dbReference type="InterPro" id="IPR014729">
    <property type="entry name" value="Rossmann-like_a/b/a_fold"/>
</dbReference>
<dbReference type="InterPro" id="IPR009080">
    <property type="entry name" value="tRNAsynth_Ia_anticodon-bd"/>
</dbReference>
<dbReference type="InterPro" id="IPR009008">
    <property type="entry name" value="Val/Leu/Ile-tRNA-synth_edit"/>
</dbReference>
<dbReference type="InterPro" id="IPR010663">
    <property type="entry name" value="Znf_FPG/IleRS"/>
</dbReference>
<dbReference type="NCBIfam" id="TIGR00392">
    <property type="entry name" value="ileS"/>
    <property type="match status" value="1"/>
</dbReference>
<dbReference type="PANTHER" id="PTHR42765:SF1">
    <property type="entry name" value="ISOLEUCINE--TRNA LIGASE, MITOCHONDRIAL"/>
    <property type="match status" value="1"/>
</dbReference>
<dbReference type="PANTHER" id="PTHR42765">
    <property type="entry name" value="SOLEUCYL-TRNA SYNTHETASE"/>
    <property type="match status" value="1"/>
</dbReference>
<dbReference type="Pfam" id="PF08264">
    <property type="entry name" value="Anticodon_1"/>
    <property type="match status" value="1"/>
</dbReference>
<dbReference type="Pfam" id="PF00133">
    <property type="entry name" value="tRNA-synt_1"/>
    <property type="match status" value="1"/>
</dbReference>
<dbReference type="Pfam" id="PF06827">
    <property type="entry name" value="zf-FPG_IleRS"/>
    <property type="match status" value="1"/>
</dbReference>
<dbReference type="PRINTS" id="PR00984">
    <property type="entry name" value="TRNASYNTHILE"/>
</dbReference>
<dbReference type="SUPFAM" id="SSF47323">
    <property type="entry name" value="Anticodon-binding domain of a subclass of class I aminoacyl-tRNA synthetases"/>
    <property type="match status" value="1"/>
</dbReference>
<dbReference type="SUPFAM" id="SSF52374">
    <property type="entry name" value="Nucleotidylyl transferase"/>
    <property type="match status" value="1"/>
</dbReference>
<dbReference type="SUPFAM" id="SSF50677">
    <property type="entry name" value="ValRS/IleRS/LeuRS editing domain"/>
    <property type="match status" value="1"/>
</dbReference>
<dbReference type="PROSITE" id="PS00178">
    <property type="entry name" value="AA_TRNA_LIGASE_I"/>
    <property type="match status" value="1"/>
</dbReference>
<evidence type="ECO:0000255" key="1">
    <source>
        <dbReference type="HAMAP-Rule" id="MF_02002"/>
    </source>
</evidence>
<proteinExistence type="inferred from homology"/>
<protein>
    <recommendedName>
        <fullName evidence="1">Isoleucine--tRNA ligase</fullName>
        <ecNumber evidence="1">6.1.1.5</ecNumber>
    </recommendedName>
    <alternativeName>
        <fullName evidence="1">Isoleucyl-tRNA synthetase</fullName>
        <shortName evidence="1">IleRS</shortName>
    </alternativeName>
</protein>